<proteinExistence type="inferred from homology"/>
<name>BGALB_ASPFU</name>
<sequence length="1015" mass="111681">MAHIYRLLLLLLSNLWFSTAAQNQSETEWPLHDNGLSKVVQWDHYSFQVNGQRIFIFSGEFHYWRIPVPELWRDILEKVKATGFTAFAFYSSWAYHAPNNSTVDFSTGARDITPIFELAKELGMYMIVRPGPYVNAEASAGGFPLWLMTGEYGSLRNDDPRYTAAWTPYFANMSQITSKYQVTDGHNTLVYQIENEYGQQWIGDPKNRNPNKTAVAYMELLEASARENGITVPLTSNDPNMNSKSWGSDWSNAGGNVDVAGLDSYPSCWTCDVSQCTSTNGEYVPYKVIDYYDYFQEVQPTLPSFMPEFQGGSYNPWAGPEGGCPQDTSAEFANLFYRWNIGQRVTAMSLYMLYGGTNWGAIAAPVTATSYDYSAPISEDRSIGAKYSETKLLALFTRTAKDLTMTEAIGNGTQYTTNTAVRAFELRNPQTNAGFYVTFHTDTTVGGNQAFKLHVNTSVGALTVPKNEGLIQLNGHQSKIIVTDFTLGKRTLLYSTAEVLTYAVFENRPTLVLWVPTGESGEFAIKGAKSGKVENGDGCSGIKFKREKDYLVVNFSQAKGLSVLRLDNGVRVVLLDKAAAYRFWAPALTDDPNVQETETVLVHGPYLVRSASISKTTLALRGDSVEKTTLEIFAPHSVRKITWNGKEVQTSHTPYGSLKATLAAPPDIKLPALTSWRSNDSLPERLPSYDDSGPAWIEANHMTTSNPSPPATFPVLYADEYGFHNGVRLWRGYFNGSASGVFLNIQGGSAFGWSAWLNGHFLDSHLGTATTSQANKTLTFPSSILNPTENVLLIVHDDTGHDQTTGALNPRGILEARLLSNDTSSPPPEFTHWRLAGTAGGESNLDPIRGVFNEDGLFAERMGWHLPGFDDSAWTSENSATSASSALSFTGATVRFFRSVVPLNIPAGLDVSISFVLSTPTAAPKGYRAQLFVNGYQYGRYNPHIGNQVVFPVPPGILDYQGDNTIGLAVWAQTEEGAGIQVDWKVNYVADSSLSVAGFGKGLRPGWTEERLKFA</sequence>
<feature type="signal peptide" evidence="2">
    <location>
        <begin position="1"/>
        <end position="20"/>
    </location>
</feature>
<feature type="chain" id="PRO_0000395225" description="Probable beta-galactosidase B">
    <location>
        <begin position="21"/>
        <end position="1015"/>
    </location>
</feature>
<feature type="active site" description="Proton donor" evidence="2">
    <location>
        <position position="196"/>
    </location>
</feature>
<feature type="active site" description="Nucleophile" evidence="2">
    <location>
        <position position="308"/>
    </location>
</feature>
<feature type="binding site" evidence="1">
    <location>
        <position position="90"/>
    </location>
    <ligand>
        <name>substrate</name>
    </ligand>
</feature>
<feature type="binding site" evidence="1">
    <location>
        <position position="135"/>
    </location>
    <ligand>
        <name>substrate</name>
    </ligand>
</feature>
<feature type="binding site" evidence="1">
    <location>
        <position position="136"/>
    </location>
    <ligand>
        <name>substrate</name>
    </ligand>
</feature>
<feature type="binding site" evidence="1">
    <location>
        <position position="137"/>
    </location>
    <ligand>
        <name>substrate</name>
    </ligand>
</feature>
<feature type="binding site" evidence="1">
    <location>
        <position position="195"/>
    </location>
    <ligand>
        <name>substrate</name>
    </ligand>
</feature>
<feature type="binding site" evidence="1">
    <location>
        <position position="265"/>
    </location>
    <ligand>
        <name>substrate</name>
    </ligand>
</feature>
<feature type="binding site" evidence="1">
    <location>
        <position position="373"/>
    </location>
    <ligand>
        <name>substrate</name>
    </ligand>
</feature>
<feature type="glycosylation site" description="N-linked (GlcNAc...) asparagine" evidence="2">
    <location>
        <position position="23"/>
    </location>
</feature>
<feature type="glycosylation site" description="N-linked (GlcNAc...) asparagine" evidence="2">
    <location>
        <position position="99"/>
    </location>
</feature>
<feature type="glycosylation site" description="N-linked (GlcNAc...) asparagine" evidence="2">
    <location>
        <position position="100"/>
    </location>
</feature>
<feature type="glycosylation site" description="N-linked (GlcNAc...) asparagine" evidence="2">
    <location>
        <position position="172"/>
    </location>
</feature>
<feature type="glycosylation site" description="N-linked (GlcNAc...) asparagine" evidence="2">
    <location>
        <position position="211"/>
    </location>
</feature>
<feature type="glycosylation site" description="N-linked (GlcNAc...) asparagine" evidence="2">
    <location>
        <position position="411"/>
    </location>
</feature>
<feature type="glycosylation site" description="N-linked (GlcNAc...) asparagine" evidence="2">
    <location>
        <position position="456"/>
    </location>
</feature>
<feature type="glycosylation site" description="N-linked (GlcNAc...) asparagine" evidence="2">
    <location>
        <position position="554"/>
    </location>
</feature>
<feature type="glycosylation site" description="N-linked (GlcNAc...) asparagine" evidence="2">
    <location>
        <position position="679"/>
    </location>
</feature>
<feature type="glycosylation site" description="N-linked (GlcNAc...) asparagine" evidence="2">
    <location>
        <position position="735"/>
    </location>
</feature>
<feature type="glycosylation site" description="N-linked (GlcNAc...) asparagine" evidence="2">
    <location>
        <position position="775"/>
    </location>
</feature>
<feature type="glycosylation site" description="N-linked (GlcNAc...) asparagine" evidence="2">
    <location>
        <position position="821"/>
    </location>
</feature>
<feature type="disulfide bond" evidence="1">
    <location>
        <begin position="271"/>
        <end position="324"/>
    </location>
</feature>
<comment type="function">
    <text evidence="1">Cleaves beta-linked terminal galactosyl residues from gangliosides, glycoproteins, and glycosaminoglycans.</text>
</comment>
<comment type="catalytic activity">
    <reaction>
        <text>Hydrolysis of terminal non-reducing beta-D-galactose residues in beta-D-galactosides.</text>
        <dbReference type="EC" id="3.2.1.23"/>
    </reaction>
</comment>
<comment type="subcellular location">
    <subcellularLocation>
        <location evidence="1">Secreted</location>
    </subcellularLocation>
</comment>
<comment type="similarity">
    <text evidence="3">Belongs to the glycosyl hydrolase 35 family.</text>
</comment>
<protein>
    <recommendedName>
        <fullName>Probable beta-galactosidase B</fullName>
        <ecNumber>3.2.1.23</ecNumber>
    </recommendedName>
    <alternativeName>
        <fullName>Lactase B</fullName>
    </alternativeName>
</protein>
<dbReference type="EC" id="3.2.1.23"/>
<dbReference type="EMBL" id="AAHF01000004">
    <property type="protein sequence ID" value="EAL90999.1"/>
    <property type="molecule type" value="Genomic_DNA"/>
</dbReference>
<dbReference type="RefSeq" id="XP_753037.1">
    <property type="nucleotide sequence ID" value="XM_747944.1"/>
</dbReference>
<dbReference type="SMR" id="Q4WRD3"/>
<dbReference type="STRING" id="330879.Q4WRD3"/>
<dbReference type="GlyCosmos" id="Q4WRD3">
    <property type="glycosylation" value="12 sites, No reported glycans"/>
</dbReference>
<dbReference type="EnsemblFungi" id="EAL90999">
    <property type="protein sequence ID" value="EAL90999"/>
    <property type="gene ID" value="AFUA_1G16700"/>
</dbReference>
<dbReference type="GeneID" id="3510063"/>
<dbReference type="KEGG" id="afm:AFUA_1G16700"/>
<dbReference type="eggNOG" id="KOG0496">
    <property type="taxonomic scope" value="Eukaryota"/>
</dbReference>
<dbReference type="HOGENOM" id="CLU_005732_2_1_1"/>
<dbReference type="InParanoid" id="Q4WRD3"/>
<dbReference type="OMA" id="GGCPGDI"/>
<dbReference type="OrthoDB" id="1657402at2759"/>
<dbReference type="Proteomes" id="UP000002530">
    <property type="component" value="Chromosome 1"/>
</dbReference>
<dbReference type="GO" id="GO:0005576">
    <property type="term" value="C:extracellular region"/>
    <property type="evidence" value="ECO:0007669"/>
    <property type="project" value="UniProtKB-SubCell"/>
</dbReference>
<dbReference type="GO" id="GO:0005773">
    <property type="term" value="C:vacuole"/>
    <property type="evidence" value="ECO:0000318"/>
    <property type="project" value="GO_Central"/>
</dbReference>
<dbReference type="GO" id="GO:0004565">
    <property type="term" value="F:beta-galactosidase activity"/>
    <property type="evidence" value="ECO:0000318"/>
    <property type="project" value="GO_Central"/>
</dbReference>
<dbReference type="GO" id="GO:0019388">
    <property type="term" value="P:galactose catabolic process"/>
    <property type="evidence" value="ECO:0000318"/>
    <property type="project" value="GO_Central"/>
</dbReference>
<dbReference type="GO" id="GO:0000272">
    <property type="term" value="P:polysaccharide catabolic process"/>
    <property type="evidence" value="ECO:0007669"/>
    <property type="project" value="UniProtKB-KW"/>
</dbReference>
<dbReference type="FunFam" id="2.102.20.10:FF:000001">
    <property type="entry name" value="Beta-galactosidase A"/>
    <property type="match status" value="1"/>
</dbReference>
<dbReference type="FunFam" id="2.60.390.10:FF:000001">
    <property type="entry name" value="Beta-galactosidase A"/>
    <property type="match status" value="1"/>
</dbReference>
<dbReference type="FunFam" id="3.20.20.80:FF:000040">
    <property type="entry name" value="Beta-galactosidase A"/>
    <property type="match status" value="1"/>
</dbReference>
<dbReference type="FunFam" id="2.60.120.260:FF:000138">
    <property type="entry name" value="Probable beta-galactosidase B"/>
    <property type="match status" value="1"/>
</dbReference>
<dbReference type="Gene3D" id="2.102.20.10">
    <property type="entry name" value="Beta-galactosidase, domain 2"/>
    <property type="match status" value="1"/>
</dbReference>
<dbReference type="Gene3D" id="2.60.390.10">
    <property type="entry name" value="Beta-galactosidase, domain 3"/>
    <property type="match status" value="1"/>
</dbReference>
<dbReference type="Gene3D" id="2.60.120.260">
    <property type="entry name" value="Galactose-binding domain-like"/>
    <property type="match status" value="2"/>
</dbReference>
<dbReference type="Gene3D" id="3.20.20.80">
    <property type="entry name" value="Glycosidases"/>
    <property type="match status" value="1"/>
</dbReference>
<dbReference type="InterPro" id="IPR018954">
    <property type="entry name" value="Betagal_dom2"/>
</dbReference>
<dbReference type="InterPro" id="IPR037110">
    <property type="entry name" value="Betagal_dom2_sf"/>
</dbReference>
<dbReference type="InterPro" id="IPR025972">
    <property type="entry name" value="BetaGal_dom3"/>
</dbReference>
<dbReference type="InterPro" id="IPR036833">
    <property type="entry name" value="BetaGal_dom3_sf"/>
</dbReference>
<dbReference type="InterPro" id="IPR025300">
    <property type="entry name" value="BetaGal_jelly_roll_dom"/>
</dbReference>
<dbReference type="InterPro" id="IPR008979">
    <property type="entry name" value="Galactose-bd-like_sf"/>
</dbReference>
<dbReference type="InterPro" id="IPR031330">
    <property type="entry name" value="Gly_Hdrlase_35_cat"/>
</dbReference>
<dbReference type="InterPro" id="IPR001944">
    <property type="entry name" value="Glycoside_Hdrlase_35"/>
</dbReference>
<dbReference type="InterPro" id="IPR017853">
    <property type="entry name" value="Glycoside_hydrolase_SF"/>
</dbReference>
<dbReference type="PANTHER" id="PTHR23421">
    <property type="entry name" value="BETA-GALACTOSIDASE RELATED"/>
    <property type="match status" value="1"/>
</dbReference>
<dbReference type="Pfam" id="PF13364">
    <property type="entry name" value="BetaGal_ABD2"/>
    <property type="match status" value="2"/>
</dbReference>
<dbReference type="Pfam" id="PF10435">
    <property type="entry name" value="BetaGal_dom2"/>
    <property type="match status" value="1"/>
</dbReference>
<dbReference type="Pfam" id="PF13363">
    <property type="entry name" value="BetaGal_dom3"/>
    <property type="match status" value="1"/>
</dbReference>
<dbReference type="Pfam" id="PF01301">
    <property type="entry name" value="Glyco_hydro_35"/>
    <property type="match status" value="1"/>
</dbReference>
<dbReference type="PRINTS" id="PR00742">
    <property type="entry name" value="GLHYDRLASE35"/>
</dbReference>
<dbReference type="SMART" id="SM01029">
    <property type="entry name" value="BetaGal_dom2"/>
    <property type="match status" value="1"/>
</dbReference>
<dbReference type="SUPFAM" id="SSF51445">
    <property type="entry name" value="(Trans)glycosidases"/>
    <property type="match status" value="1"/>
</dbReference>
<dbReference type="SUPFAM" id="SSF117100">
    <property type="entry name" value="Beta-galactosidase LacA, domain 3"/>
    <property type="match status" value="1"/>
</dbReference>
<dbReference type="SUPFAM" id="SSF49785">
    <property type="entry name" value="Galactose-binding domain-like"/>
    <property type="match status" value="2"/>
</dbReference>
<dbReference type="SUPFAM" id="SSF51011">
    <property type="entry name" value="Glycosyl hydrolase domain"/>
    <property type="match status" value="1"/>
</dbReference>
<keyword id="KW-0119">Carbohydrate metabolism</keyword>
<keyword id="KW-1015">Disulfide bond</keyword>
<keyword id="KW-0325">Glycoprotein</keyword>
<keyword id="KW-0326">Glycosidase</keyword>
<keyword id="KW-0378">Hydrolase</keyword>
<keyword id="KW-0624">Polysaccharide degradation</keyword>
<keyword id="KW-1185">Reference proteome</keyword>
<keyword id="KW-0964">Secreted</keyword>
<keyword id="KW-0732">Signal</keyword>
<organism>
    <name type="scientific">Aspergillus fumigatus (strain ATCC MYA-4609 / CBS 101355 / FGSC A1100 / Af293)</name>
    <name type="common">Neosartorya fumigata</name>
    <dbReference type="NCBI Taxonomy" id="330879"/>
    <lineage>
        <taxon>Eukaryota</taxon>
        <taxon>Fungi</taxon>
        <taxon>Dikarya</taxon>
        <taxon>Ascomycota</taxon>
        <taxon>Pezizomycotina</taxon>
        <taxon>Eurotiomycetes</taxon>
        <taxon>Eurotiomycetidae</taxon>
        <taxon>Eurotiales</taxon>
        <taxon>Aspergillaceae</taxon>
        <taxon>Aspergillus</taxon>
        <taxon>Aspergillus subgen. Fumigati</taxon>
    </lineage>
</organism>
<evidence type="ECO:0000250" key="1"/>
<evidence type="ECO:0000255" key="2"/>
<evidence type="ECO:0000305" key="3"/>
<reference key="1">
    <citation type="journal article" date="2005" name="Nature">
        <title>Genomic sequence of the pathogenic and allergenic filamentous fungus Aspergillus fumigatus.</title>
        <authorList>
            <person name="Nierman W.C."/>
            <person name="Pain A."/>
            <person name="Anderson M.J."/>
            <person name="Wortman J.R."/>
            <person name="Kim H.S."/>
            <person name="Arroyo J."/>
            <person name="Berriman M."/>
            <person name="Abe K."/>
            <person name="Archer D.B."/>
            <person name="Bermejo C."/>
            <person name="Bennett J.W."/>
            <person name="Bowyer P."/>
            <person name="Chen D."/>
            <person name="Collins M."/>
            <person name="Coulsen R."/>
            <person name="Davies R."/>
            <person name="Dyer P.S."/>
            <person name="Farman M.L."/>
            <person name="Fedorova N."/>
            <person name="Fedorova N.D."/>
            <person name="Feldblyum T.V."/>
            <person name="Fischer R."/>
            <person name="Fosker N."/>
            <person name="Fraser A."/>
            <person name="Garcia J.L."/>
            <person name="Garcia M.J."/>
            <person name="Goble A."/>
            <person name="Goldman G.H."/>
            <person name="Gomi K."/>
            <person name="Griffith-Jones S."/>
            <person name="Gwilliam R."/>
            <person name="Haas B.J."/>
            <person name="Haas H."/>
            <person name="Harris D.E."/>
            <person name="Horiuchi H."/>
            <person name="Huang J."/>
            <person name="Humphray S."/>
            <person name="Jimenez J."/>
            <person name="Keller N."/>
            <person name="Khouri H."/>
            <person name="Kitamoto K."/>
            <person name="Kobayashi T."/>
            <person name="Konzack S."/>
            <person name="Kulkarni R."/>
            <person name="Kumagai T."/>
            <person name="Lafton A."/>
            <person name="Latge J.-P."/>
            <person name="Li W."/>
            <person name="Lord A."/>
            <person name="Lu C."/>
            <person name="Majoros W.H."/>
            <person name="May G.S."/>
            <person name="Miller B.L."/>
            <person name="Mohamoud Y."/>
            <person name="Molina M."/>
            <person name="Monod M."/>
            <person name="Mouyna I."/>
            <person name="Mulligan S."/>
            <person name="Murphy L.D."/>
            <person name="O'Neil S."/>
            <person name="Paulsen I."/>
            <person name="Penalva M.A."/>
            <person name="Pertea M."/>
            <person name="Price C."/>
            <person name="Pritchard B.L."/>
            <person name="Quail M.A."/>
            <person name="Rabbinowitsch E."/>
            <person name="Rawlins N."/>
            <person name="Rajandream M.A."/>
            <person name="Reichard U."/>
            <person name="Renauld H."/>
            <person name="Robson G.D."/>
            <person name="Rodriguez de Cordoba S."/>
            <person name="Rodriguez-Pena J.M."/>
            <person name="Ronning C.M."/>
            <person name="Rutter S."/>
            <person name="Salzberg S.L."/>
            <person name="Sanchez M."/>
            <person name="Sanchez-Ferrero J.C."/>
            <person name="Saunders D."/>
            <person name="Seeger K."/>
            <person name="Squares R."/>
            <person name="Squares S."/>
            <person name="Takeuchi M."/>
            <person name="Tekaia F."/>
            <person name="Turner G."/>
            <person name="Vazquez de Aldana C.R."/>
            <person name="Weidman J."/>
            <person name="White O."/>
            <person name="Woodward J.R."/>
            <person name="Yu J.-H."/>
            <person name="Fraser C.M."/>
            <person name="Galagan J.E."/>
            <person name="Asai K."/>
            <person name="Machida M."/>
            <person name="Hall N."/>
            <person name="Barrell B.G."/>
            <person name="Denning D.W."/>
        </authorList>
    </citation>
    <scope>NUCLEOTIDE SEQUENCE [LARGE SCALE GENOMIC DNA]</scope>
    <source>
        <strain>ATCC MYA-4609 / CBS 101355 / FGSC A1100 / Af293</strain>
    </source>
</reference>
<accession>Q4WRD3</accession>
<gene>
    <name type="primary">lacB</name>
    <name type="ORF">AFUA_1G16700</name>
</gene>